<name>PUR5_ECO24</name>
<protein>
    <recommendedName>
        <fullName evidence="1">Phosphoribosylformylglycinamidine cyclo-ligase</fullName>
        <ecNumber evidence="1">6.3.3.1</ecNumber>
    </recommendedName>
    <alternativeName>
        <fullName evidence="1">AIR synthase</fullName>
    </alternativeName>
    <alternativeName>
        <fullName evidence="1">AIRS</fullName>
    </alternativeName>
    <alternativeName>
        <fullName evidence="1">Phosphoribosyl-aminoimidazole synthetase</fullName>
    </alternativeName>
</protein>
<proteinExistence type="inferred from homology"/>
<comment type="catalytic activity">
    <reaction evidence="1">
        <text>2-formamido-N(1)-(5-O-phospho-beta-D-ribosyl)acetamidine + ATP = 5-amino-1-(5-phospho-beta-D-ribosyl)imidazole + ADP + phosphate + H(+)</text>
        <dbReference type="Rhea" id="RHEA:23032"/>
        <dbReference type="ChEBI" id="CHEBI:15378"/>
        <dbReference type="ChEBI" id="CHEBI:30616"/>
        <dbReference type="ChEBI" id="CHEBI:43474"/>
        <dbReference type="ChEBI" id="CHEBI:137981"/>
        <dbReference type="ChEBI" id="CHEBI:147287"/>
        <dbReference type="ChEBI" id="CHEBI:456216"/>
        <dbReference type="EC" id="6.3.3.1"/>
    </reaction>
</comment>
<comment type="pathway">
    <text evidence="1">Purine metabolism; IMP biosynthesis via de novo pathway; 5-amino-1-(5-phospho-D-ribosyl)imidazole from N(2)-formyl-N(1)-(5-phospho-D-ribosyl)glycinamide: step 2/2.</text>
</comment>
<comment type="subcellular location">
    <subcellularLocation>
        <location evidence="1">Cytoplasm</location>
    </subcellularLocation>
</comment>
<comment type="similarity">
    <text evidence="1">Belongs to the AIR synthase family.</text>
</comment>
<accession>A7ZPU2</accession>
<sequence length="345" mass="36889">MTDKTSLSYKDAGVDIDAGNALVGRIKGVVKKTRRPEVMGGLGGFGALCALPQKYREPVLVSGTDGVGTKLRLAMDLKRHDTIGIDLVAMCVNDLVVQGAEPLFFLDYYATGKLDVDTASAVISGIAEGCLQSGCSLVGGETAEMPGMYHGEDYDVAGFCVGVVEKSEIIDGSKVSDGDVLIALGSSGPHSNGYSLVRKILEVSGCDPQTTELDGKPLADHLLAPTRIYVKSVLELIEKVDVHAIAHLTGGGFWENIPRVLPDNTQAVIDESSWQWPEVFNWLQTAGNVERHEMYRTFNCGVGMIIALPAPEVDKALALLNSNGENAWKIGIIKASDSEQRVVIE</sequence>
<keyword id="KW-0067">ATP-binding</keyword>
<keyword id="KW-0963">Cytoplasm</keyword>
<keyword id="KW-0436">Ligase</keyword>
<keyword id="KW-0547">Nucleotide-binding</keyword>
<keyword id="KW-0658">Purine biosynthesis</keyword>
<keyword id="KW-1185">Reference proteome</keyword>
<organism>
    <name type="scientific">Escherichia coli O139:H28 (strain E24377A / ETEC)</name>
    <dbReference type="NCBI Taxonomy" id="331111"/>
    <lineage>
        <taxon>Bacteria</taxon>
        <taxon>Pseudomonadati</taxon>
        <taxon>Pseudomonadota</taxon>
        <taxon>Gammaproteobacteria</taxon>
        <taxon>Enterobacterales</taxon>
        <taxon>Enterobacteriaceae</taxon>
        <taxon>Escherichia</taxon>
    </lineage>
</organism>
<dbReference type="EC" id="6.3.3.1" evidence="1"/>
<dbReference type="EMBL" id="CP000800">
    <property type="protein sequence ID" value="ABV20545.1"/>
    <property type="molecule type" value="Genomic_DNA"/>
</dbReference>
<dbReference type="RefSeq" id="WP_001299062.1">
    <property type="nucleotide sequence ID" value="NC_009801.1"/>
</dbReference>
<dbReference type="SMR" id="A7ZPU2"/>
<dbReference type="KEGG" id="ecw:EcE24377A_2782"/>
<dbReference type="HOGENOM" id="CLU_047116_0_0_6"/>
<dbReference type="UniPathway" id="UPA00074">
    <property type="reaction ID" value="UER00129"/>
</dbReference>
<dbReference type="Proteomes" id="UP000001122">
    <property type="component" value="Chromosome"/>
</dbReference>
<dbReference type="GO" id="GO:0005829">
    <property type="term" value="C:cytosol"/>
    <property type="evidence" value="ECO:0007669"/>
    <property type="project" value="TreeGrafter"/>
</dbReference>
<dbReference type="GO" id="GO:0005524">
    <property type="term" value="F:ATP binding"/>
    <property type="evidence" value="ECO:0007669"/>
    <property type="project" value="UniProtKB-KW"/>
</dbReference>
<dbReference type="GO" id="GO:0004637">
    <property type="term" value="F:phosphoribosylamine-glycine ligase activity"/>
    <property type="evidence" value="ECO:0007669"/>
    <property type="project" value="TreeGrafter"/>
</dbReference>
<dbReference type="GO" id="GO:0004641">
    <property type="term" value="F:phosphoribosylformylglycinamidine cyclo-ligase activity"/>
    <property type="evidence" value="ECO:0007669"/>
    <property type="project" value="UniProtKB-UniRule"/>
</dbReference>
<dbReference type="GO" id="GO:0006189">
    <property type="term" value="P:'de novo' IMP biosynthetic process"/>
    <property type="evidence" value="ECO:0007669"/>
    <property type="project" value="UniProtKB-UniRule"/>
</dbReference>
<dbReference type="GO" id="GO:0046084">
    <property type="term" value="P:adenine biosynthetic process"/>
    <property type="evidence" value="ECO:0007669"/>
    <property type="project" value="TreeGrafter"/>
</dbReference>
<dbReference type="CDD" id="cd02196">
    <property type="entry name" value="PurM"/>
    <property type="match status" value="1"/>
</dbReference>
<dbReference type="FunFam" id="3.30.1330.10:FF:000001">
    <property type="entry name" value="Phosphoribosylformylglycinamidine cyclo-ligase"/>
    <property type="match status" value="1"/>
</dbReference>
<dbReference type="FunFam" id="3.90.650.10:FF:000001">
    <property type="entry name" value="Phosphoribosylformylglycinamidine cyclo-ligase"/>
    <property type="match status" value="1"/>
</dbReference>
<dbReference type="Gene3D" id="3.90.650.10">
    <property type="entry name" value="PurM-like C-terminal domain"/>
    <property type="match status" value="1"/>
</dbReference>
<dbReference type="Gene3D" id="3.30.1330.10">
    <property type="entry name" value="PurM-like, N-terminal domain"/>
    <property type="match status" value="1"/>
</dbReference>
<dbReference type="HAMAP" id="MF_00741">
    <property type="entry name" value="AIRS"/>
    <property type="match status" value="1"/>
</dbReference>
<dbReference type="InterPro" id="IPR010918">
    <property type="entry name" value="PurM-like_C_dom"/>
</dbReference>
<dbReference type="InterPro" id="IPR036676">
    <property type="entry name" value="PurM-like_C_sf"/>
</dbReference>
<dbReference type="InterPro" id="IPR016188">
    <property type="entry name" value="PurM-like_N"/>
</dbReference>
<dbReference type="InterPro" id="IPR036921">
    <property type="entry name" value="PurM-like_N_sf"/>
</dbReference>
<dbReference type="InterPro" id="IPR004733">
    <property type="entry name" value="PurM_cligase"/>
</dbReference>
<dbReference type="NCBIfam" id="TIGR00878">
    <property type="entry name" value="purM"/>
    <property type="match status" value="1"/>
</dbReference>
<dbReference type="PANTHER" id="PTHR10520:SF12">
    <property type="entry name" value="TRIFUNCTIONAL PURINE BIOSYNTHETIC PROTEIN ADENOSINE-3"/>
    <property type="match status" value="1"/>
</dbReference>
<dbReference type="PANTHER" id="PTHR10520">
    <property type="entry name" value="TRIFUNCTIONAL PURINE BIOSYNTHETIC PROTEIN ADENOSINE-3-RELATED"/>
    <property type="match status" value="1"/>
</dbReference>
<dbReference type="Pfam" id="PF00586">
    <property type="entry name" value="AIRS"/>
    <property type="match status" value="1"/>
</dbReference>
<dbReference type="Pfam" id="PF02769">
    <property type="entry name" value="AIRS_C"/>
    <property type="match status" value="1"/>
</dbReference>
<dbReference type="SUPFAM" id="SSF56042">
    <property type="entry name" value="PurM C-terminal domain-like"/>
    <property type="match status" value="1"/>
</dbReference>
<dbReference type="SUPFAM" id="SSF55326">
    <property type="entry name" value="PurM N-terminal domain-like"/>
    <property type="match status" value="1"/>
</dbReference>
<reference key="1">
    <citation type="journal article" date="2008" name="J. Bacteriol.">
        <title>The pangenome structure of Escherichia coli: comparative genomic analysis of E. coli commensal and pathogenic isolates.</title>
        <authorList>
            <person name="Rasko D.A."/>
            <person name="Rosovitz M.J."/>
            <person name="Myers G.S.A."/>
            <person name="Mongodin E.F."/>
            <person name="Fricke W.F."/>
            <person name="Gajer P."/>
            <person name="Crabtree J."/>
            <person name="Sebaihia M."/>
            <person name="Thomson N.R."/>
            <person name="Chaudhuri R."/>
            <person name="Henderson I.R."/>
            <person name="Sperandio V."/>
            <person name="Ravel J."/>
        </authorList>
    </citation>
    <scope>NUCLEOTIDE SEQUENCE [LARGE SCALE GENOMIC DNA]</scope>
    <source>
        <strain>E24377A / ETEC</strain>
    </source>
</reference>
<evidence type="ECO:0000255" key="1">
    <source>
        <dbReference type="HAMAP-Rule" id="MF_00741"/>
    </source>
</evidence>
<gene>
    <name evidence="1" type="primary">purM</name>
    <name type="ordered locus">EcE24377A_2782</name>
</gene>
<feature type="chain" id="PRO_1000062158" description="Phosphoribosylformylglycinamidine cyclo-ligase">
    <location>
        <begin position="1"/>
        <end position="345"/>
    </location>
</feature>